<accession>O14348</accession>
<gene>
    <name type="primary">ncb2</name>
    <name type="ORF">SPBC30D10.02</name>
</gene>
<keyword id="KW-0963">Cytoplasm</keyword>
<keyword id="KW-0539">Nucleus</keyword>
<keyword id="KW-1185">Reference proteome</keyword>
<comment type="subcellular location">
    <subcellularLocation>
        <location evidence="3">Cytoplasm</location>
    </subcellularLocation>
    <subcellularLocation>
        <location evidence="3">Nucleus</location>
    </subcellularLocation>
</comment>
<comment type="similarity">
    <text evidence="4">Belongs to the NC2 beta/DR1 family.</text>
</comment>
<feature type="chain" id="PRO_0000317090" description="Negative cofactor 2 complex subunit beta">
    <location>
        <begin position="1"/>
        <end position="161"/>
    </location>
</feature>
<feature type="domain" description="Histone-fold" evidence="1">
    <location>
        <begin position="11"/>
        <end position="75"/>
    </location>
</feature>
<feature type="region of interest" description="Disordered" evidence="2">
    <location>
        <begin position="93"/>
        <end position="116"/>
    </location>
</feature>
<feature type="region of interest" description="Disordered" evidence="2">
    <location>
        <begin position="130"/>
        <end position="161"/>
    </location>
</feature>
<feature type="compositionally biased region" description="Basic and acidic residues" evidence="2">
    <location>
        <begin position="93"/>
        <end position="107"/>
    </location>
</feature>
<feature type="compositionally biased region" description="Polar residues" evidence="2">
    <location>
        <begin position="135"/>
        <end position="147"/>
    </location>
</feature>
<evidence type="ECO:0000255" key="1"/>
<evidence type="ECO:0000256" key="2">
    <source>
        <dbReference type="SAM" id="MobiDB-lite"/>
    </source>
</evidence>
<evidence type="ECO:0000269" key="3">
    <source>
    </source>
</evidence>
<evidence type="ECO:0000305" key="4"/>
<reference key="1">
    <citation type="journal article" date="2002" name="Nature">
        <title>The genome sequence of Schizosaccharomyces pombe.</title>
        <authorList>
            <person name="Wood V."/>
            <person name="Gwilliam R."/>
            <person name="Rajandream M.A."/>
            <person name="Lyne M.H."/>
            <person name="Lyne R."/>
            <person name="Stewart A."/>
            <person name="Sgouros J.G."/>
            <person name="Peat N."/>
            <person name="Hayles J."/>
            <person name="Baker S.G."/>
            <person name="Basham D."/>
            <person name="Bowman S."/>
            <person name="Brooks K."/>
            <person name="Brown D."/>
            <person name="Brown S."/>
            <person name="Chillingworth T."/>
            <person name="Churcher C.M."/>
            <person name="Collins M."/>
            <person name="Connor R."/>
            <person name="Cronin A."/>
            <person name="Davis P."/>
            <person name="Feltwell T."/>
            <person name="Fraser A."/>
            <person name="Gentles S."/>
            <person name="Goble A."/>
            <person name="Hamlin N."/>
            <person name="Harris D.E."/>
            <person name="Hidalgo J."/>
            <person name="Hodgson G."/>
            <person name="Holroyd S."/>
            <person name="Hornsby T."/>
            <person name="Howarth S."/>
            <person name="Huckle E.J."/>
            <person name="Hunt S."/>
            <person name="Jagels K."/>
            <person name="James K.D."/>
            <person name="Jones L."/>
            <person name="Jones M."/>
            <person name="Leather S."/>
            <person name="McDonald S."/>
            <person name="McLean J."/>
            <person name="Mooney P."/>
            <person name="Moule S."/>
            <person name="Mungall K.L."/>
            <person name="Murphy L.D."/>
            <person name="Niblett D."/>
            <person name="Odell C."/>
            <person name="Oliver K."/>
            <person name="O'Neil S."/>
            <person name="Pearson D."/>
            <person name="Quail M.A."/>
            <person name="Rabbinowitsch E."/>
            <person name="Rutherford K.M."/>
            <person name="Rutter S."/>
            <person name="Saunders D."/>
            <person name="Seeger K."/>
            <person name="Sharp S."/>
            <person name="Skelton J."/>
            <person name="Simmonds M.N."/>
            <person name="Squares R."/>
            <person name="Squares S."/>
            <person name="Stevens K."/>
            <person name="Taylor K."/>
            <person name="Taylor R.G."/>
            <person name="Tivey A."/>
            <person name="Walsh S.V."/>
            <person name="Warren T."/>
            <person name="Whitehead S."/>
            <person name="Woodward J.R."/>
            <person name="Volckaert G."/>
            <person name="Aert R."/>
            <person name="Robben J."/>
            <person name="Grymonprez B."/>
            <person name="Weltjens I."/>
            <person name="Vanstreels E."/>
            <person name="Rieger M."/>
            <person name="Schaefer M."/>
            <person name="Mueller-Auer S."/>
            <person name="Gabel C."/>
            <person name="Fuchs M."/>
            <person name="Duesterhoeft A."/>
            <person name="Fritzc C."/>
            <person name="Holzer E."/>
            <person name="Moestl D."/>
            <person name="Hilbert H."/>
            <person name="Borzym K."/>
            <person name="Langer I."/>
            <person name="Beck A."/>
            <person name="Lehrach H."/>
            <person name="Reinhardt R."/>
            <person name="Pohl T.M."/>
            <person name="Eger P."/>
            <person name="Zimmermann W."/>
            <person name="Wedler H."/>
            <person name="Wambutt R."/>
            <person name="Purnelle B."/>
            <person name="Goffeau A."/>
            <person name="Cadieu E."/>
            <person name="Dreano S."/>
            <person name="Gloux S."/>
            <person name="Lelaure V."/>
            <person name="Mottier S."/>
            <person name="Galibert F."/>
            <person name="Aves S.J."/>
            <person name="Xiang Z."/>
            <person name="Hunt C."/>
            <person name="Moore K."/>
            <person name="Hurst S.M."/>
            <person name="Lucas M."/>
            <person name="Rochet M."/>
            <person name="Gaillardin C."/>
            <person name="Tallada V.A."/>
            <person name="Garzon A."/>
            <person name="Thode G."/>
            <person name="Daga R.R."/>
            <person name="Cruzado L."/>
            <person name="Jimenez J."/>
            <person name="Sanchez M."/>
            <person name="del Rey F."/>
            <person name="Benito J."/>
            <person name="Dominguez A."/>
            <person name="Revuelta J.L."/>
            <person name="Moreno S."/>
            <person name="Armstrong J."/>
            <person name="Forsburg S.L."/>
            <person name="Cerutti L."/>
            <person name="Lowe T."/>
            <person name="McCombie W.R."/>
            <person name="Paulsen I."/>
            <person name="Potashkin J."/>
            <person name="Shpakovski G.V."/>
            <person name="Ussery D."/>
            <person name="Barrell B.G."/>
            <person name="Nurse P."/>
        </authorList>
    </citation>
    <scope>NUCLEOTIDE SEQUENCE [LARGE SCALE GENOMIC DNA]</scope>
    <source>
        <strain>972 / ATCC 24843</strain>
    </source>
</reference>
<reference key="2">
    <citation type="journal article" date="2006" name="Nat. Biotechnol.">
        <title>ORFeome cloning and global analysis of protein localization in the fission yeast Schizosaccharomyces pombe.</title>
        <authorList>
            <person name="Matsuyama A."/>
            <person name="Arai R."/>
            <person name="Yashiroda Y."/>
            <person name="Shirai A."/>
            <person name="Kamata A."/>
            <person name="Sekido S."/>
            <person name="Kobayashi Y."/>
            <person name="Hashimoto A."/>
            <person name="Hamamoto M."/>
            <person name="Hiraoka Y."/>
            <person name="Horinouchi S."/>
            <person name="Yoshida M."/>
        </authorList>
    </citation>
    <scope>SUBCELLULAR LOCATION [LARGE SCALE ANALYSIS]</scope>
</reference>
<dbReference type="EMBL" id="CU329671">
    <property type="protein sequence ID" value="CAB10797.1"/>
    <property type="molecule type" value="Genomic_DNA"/>
</dbReference>
<dbReference type="PIR" id="T40194">
    <property type="entry name" value="T40194"/>
</dbReference>
<dbReference type="RefSeq" id="NP_596283.1">
    <property type="nucleotide sequence ID" value="NM_001022204.2"/>
</dbReference>
<dbReference type="SMR" id="O14348"/>
<dbReference type="BioGRID" id="276934">
    <property type="interactions" value="7"/>
</dbReference>
<dbReference type="FunCoup" id="O14348">
    <property type="interactions" value="522"/>
</dbReference>
<dbReference type="STRING" id="284812.O14348"/>
<dbReference type="PaxDb" id="4896-SPBC30D10.02.1"/>
<dbReference type="EnsemblFungi" id="SPBC30D10.02.1">
    <property type="protein sequence ID" value="SPBC30D10.02.1:pep"/>
    <property type="gene ID" value="SPBC30D10.02"/>
</dbReference>
<dbReference type="GeneID" id="2540406"/>
<dbReference type="KEGG" id="spo:2540406"/>
<dbReference type="PomBase" id="SPBC30D10.02">
    <property type="gene designation" value="ncb2"/>
</dbReference>
<dbReference type="VEuPathDB" id="FungiDB:SPBC30D10.02"/>
<dbReference type="eggNOG" id="KOG0871">
    <property type="taxonomic scope" value="Eukaryota"/>
</dbReference>
<dbReference type="HOGENOM" id="CLU_066247_11_3_1"/>
<dbReference type="InParanoid" id="O14348"/>
<dbReference type="OMA" id="RDAKFKK"/>
<dbReference type="PhylomeDB" id="O14348"/>
<dbReference type="PRO" id="PR:O14348"/>
<dbReference type="Proteomes" id="UP000002485">
    <property type="component" value="Chromosome II"/>
</dbReference>
<dbReference type="GO" id="GO:0005829">
    <property type="term" value="C:cytosol"/>
    <property type="evidence" value="ECO:0007005"/>
    <property type="project" value="PomBase"/>
</dbReference>
<dbReference type="GO" id="GO:0017054">
    <property type="term" value="C:negative cofactor 2 complex"/>
    <property type="evidence" value="ECO:0000318"/>
    <property type="project" value="GO_Central"/>
</dbReference>
<dbReference type="GO" id="GO:0005634">
    <property type="term" value="C:nucleus"/>
    <property type="evidence" value="ECO:0007005"/>
    <property type="project" value="PomBase"/>
</dbReference>
<dbReference type="GO" id="GO:0046982">
    <property type="term" value="F:protein heterodimerization activity"/>
    <property type="evidence" value="ECO:0007669"/>
    <property type="project" value="InterPro"/>
</dbReference>
<dbReference type="GO" id="GO:0016251">
    <property type="term" value="F:RNA polymerase II general transcription initiation factor activity"/>
    <property type="evidence" value="ECO:0000318"/>
    <property type="project" value="GO_Central"/>
</dbReference>
<dbReference type="GO" id="GO:0017025">
    <property type="term" value="F:TBP-class protein binding"/>
    <property type="evidence" value="ECO:0000318"/>
    <property type="project" value="GO_Central"/>
</dbReference>
<dbReference type="GO" id="GO:0000122">
    <property type="term" value="P:negative regulation of transcription by RNA polymerase II"/>
    <property type="evidence" value="ECO:0007669"/>
    <property type="project" value="InterPro"/>
</dbReference>
<dbReference type="GO" id="GO:0051123">
    <property type="term" value="P:RNA polymerase II preinitiation complex assembly"/>
    <property type="evidence" value="ECO:0000318"/>
    <property type="project" value="GO_Central"/>
</dbReference>
<dbReference type="CDD" id="cd22905">
    <property type="entry name" value="HFD_Dr1"/>
    <property type="match status" value="1"/>
</dbReference>
<dbReference type="FunFam" id="1.10.20.10:FF:000019">
    <property type="entry name" value="Negative cofactor 2 beta"/>
    <property type="match status" value="1"/>
</dbReference>
<dbReference type="Gene3D" id="1.10.20.10">
    <property type="entry name" value="Histone, subunit A"/>
    <property type="match status" value="1"/>
</dbReference>
<dbReference type="InterPro" id="IPR003958">
    <property type="entry name" value="CBFA_NFYB_domain"/>
</dbReference>
<dbReference type="InterPro" id="IPR009072">
    <property type="entry name" value="Histone-fold"/>
</dbReference>
<dbReference type="InterPro" id="IPR042225">
    <property type="entry name" value="Ncb2"/>
</dbReference>
<dbReference type="PANTHER" id="PTHR46138">
    <property type="entry name" value="PROTEIN DR1"/>
    <property type="match status" value="1"/>
</dbReference>
<dbReference type="PANTHER" id="PTHR46138:SF1">
    <property type="entry name" value="PROTEIN DR1"/>
    <property type="match status" value="1"/>
</dbReference>
<dbReference type="Pfam" id="PF00808">
    <property type="entry name" value="CBFD_NFYB_HMF"/>
    <property type="match status" value="1"/>
</dbReference>
<dbReference type="SUPFAM" id="SSF47113">
    <property type="entry name" value="Histone-fold"/>
    <property type="match status" value="1"/>
</dbReference>
<sequence length="161" mass="18327">MNDGFADDELSLPKATVQKMVSDILPVDLTFTKEARDLLIECCVEFIHLVSSEANEICEKEAKKTIAAEHIIKALENLEFKEYIAEALEVAAEHKEQQKNREKKSSKFEQSGVSRDELLRQQEELLSRARERFKNQNIAHDNHTTTAIPVPTASETETKEN</sequence>
<name>NC2B_SCHPO</name>
<organism>
    <name type="scientific">Schizosaccharomyces pombe (strain 972 / ATCC 24843)</name>
    <name type="common">Fission yeast</name>
    <dbReference type="NCBI Taxonomy" id="284812"/>
    <lineage>
        <taxon>Eukaryota</taxon>
        <taxon>Fungi</taxon>
        <taxon>Dikarya</taxon>
        <taxon>Ascomycota</taxon>
        <taxon>Taphrinomycotina</taxon>
        <taxon>Schizosaccharomycetes</taxon>
        <taxon>Schizosaccharomycetales</taxon>
        <taxon>Schizosaccharomycetaceae</taxon>
        <taxon>Schizosaccharomyces</taxon>
    </lineage>
</organism>
<proteinExistence type="inferred from homology"/>
<protein>
    <recommendedName>
        <fullName>Negative cofactor 2 complex subunit beta</fullName>
        <shortName>NC2 complex subunit beta</shortName>
    </recommendedName>
</protein>